<dbReference type="EMBL" id="BG350800">
    <property type="status" value="NOT_ANNOTATED_CDS"/>
    <property type="molecule type" value="mRNA"/>
</dbReference>
<dbReference type="SMR" id="Q9S8M0"/>
<dbReference type="STRING" id="4113.Q9S8M0"/>
<dbReference type="iPTMnet" id="Q9S8M0"/>
<dbReference type="PaxDb" id="4113-PGSC0003DMT400050249"/>
<dbReference type="InParanoid" id="Q9S8M0"/>
<dbReference type="Proteomes" id="UP000011115">
    <property type="component" value="Unassembled WGS sequence"/>
</dbReference>
<dbReference type="ExpressionAtlas" id="Q9S8M0">
    <property type="expression patterns" value="baseline and differential"/>
</dbReference>
<dbReference type="GO" id="GO:0030246">
    <property type="term" value="F:carbohydrate binding"/>
    <property type="evidence" value="ECO:0007669"/>
    <property type="project" value="UniProtKB-KW"/>
</dbReference>
<dbReference type="GO" id="GO:0008061">
    <property type="term" value="F:chitin binding"/>
    <property type="evidence" value="ECO:0007669"/>
    <property type="project" value="UniProtKB-KW"/>
</dbReference>
<dbReference type="GO" id="GO:0006952">
    <property type="term" value="P:defense response"/>
    <property type="evidence" value="ECO:0007669"/>
    <property type="project" value="UniProtKB-KW"/>
</dbReference>
<dbReference type="CDD" id="cd00035">
    <property type="entry name" value="ChtBD1"/>
    <property type="match status" value="3"/>
</dbReference>
<dbReference type="Gene3D" id="3.30.60.10">
    <property type="entry name" value="Endochitinase-like"/>
    <property type="match status" value="4"/>
</dbReference>
<dbReference type="InterPro" id="IPR001002">
    <property type="entry name" value="Chitin-bd_1"/>
</dbReference>
<dbReference type="InterPro" id="IPR036861">
    <property type="entry name" value="Endochitinase-like_sf"/>
</dbReference>
<dbReference type="PANTHER" id="PTHR47849">
    <property type="entry name" value="CHITIN-BINDING LECTIN 1"/>
    <property type="match status" value="1"/>
</dbReference>
<dbReference type="PANTHER" id="PTHR47849:SF6">
    <property type="entry name" value="CHITIN-BINDING LECTIN 1"/>
    <property type="match status" value="1"/>
</dbReference>
<dbReference type="Pfam" id="PF00187">
    <property type="entry name" value="Chitin_bind_1"/>
    <property type="match status" value="4"/>
</dbReference>
<dbReference type="PRINTS" id="PR01217">
    <property type="entry name" value="PRICHEXTENSN"/>
</dbReference>
<dbReference type="SMART" id="SM00270">
    <property type="entry name" value="ChtBD1"/>
    <property type="match status" value="4"/>
</dbReference>
<dbReference type="SUPFAM" id="SSF57016">
    <property type="entry name" value="Plant lectins/antimicrobial peptides"/>
    <property type="match status" value="4"/>
</dbReference>
<dbReference type="PROSITE" id="PS00026">
    <property type="entry name" value="CHIT_BIND_I_1"/>
    <property type="match status" value="2"/>
</dbReference>
<dbReference type="PROSITE" id="PS50941">
    <property type="entry name" value="CHIT_BIND_I_2"/>
    <property type="match status" value="4"/>
</dbReference>
<comment type="function">
    <text>This protein might function as a defense against chitin containing pathogens. Binds to several branched or linear N-acetyllactosamine-containing glycosphingolipids and also to lactosylceramide with sphingosine and non-hydroxy fatty acids.</text>
</comment>
<comment type="subunit">
    <text evidence="7">Homodimer.</text>
</comment>
<comment type="PTM">
    <text evidence="5">Heavily glycosylated with beta-arabinose on hydroxyprolines and with alpha-galactose on serines of the extensin-like domain. As no other sugars could be detected in the native lectin, it is unlikely that the three putative N-glycosylation sites are actually glycosylated.</text>
</comment>
<comment type="PTM">
    <text>The N-terminus is blocked. The N-terminal sequences proposed in PubMed:9022287 and PubMed:11056399 originate probably from truncated proteins.</text>
</comment>
<comment type="similarity">
    <text evidence="7">In the central section; belongs to the extensin family.</text>
</comment>
<evidence type="ECO:0000250" key="1"/>
<evidence type="ECO:0000255" key="2"/>
<evidence type="ECO:0000255" key="3">
    <source>
        <dbReference type="PROSITE-ProRule" id="PRU00261"/>
    </source>
</evidence>
<evidence type="ECO:0000256" key="4">
    <source>
        <dbReference type="SAM" id="MobiDB-lite"/>
    </source>
</evidence>
<evidence type="ECO:0000269" key="5">
    <source>
    </source>
</evidence>
<evidence type="ECO:0000269" key="6">
    <source>
    </source>
</evidence>
<evidence type="ECO:0000305" key="7"/>
<evidence type="ECO:0000305" key="8">
    <source>
    </source>
</evidence>
<proteinExistence type="evidence at protein level"/>
<protein>
    <recommendedName>
        <fullName>Chitin-binding lectin 1</fullName>
    </recommendedName>
    <alternativeName>
        <fullName>PL-I</fullName>
    </alternativeName>
</protein>
<sequence length="323" mass="33554">MKETAISVLALLTLFLLEVVSANELSLPFHLPINETIGLEVFQGINNASPPSPSPLPYPQCGMKKGGGKCIKTGECCSIWGWCGTTNAYCSPGYCQKQCPGPYPEGRCGWQANGKSCPTGTGQCCSNGGWCGTTSDYCASKNCQSQCKLPSPPPPPPPPSPPPPSPPSPPPPSPPPPPPPSPPPPSPPPPSPSPPPPPASPPPPPPALPYPQCGIKKGGGKCIKTGECCSIWGWCGTTNAYCSPGYCQKQCPGPYPEGRCGWQANGKSCPTGTGHCCSNAGWCGTTSDYCAPVNCQAQCNTTTLTSPIKNRMRGIESFMLNVV</sequence>
<organism>
    <name type="scientific">Solanum tuberosum</name>
    <name type="common">Potato</name>
    <dbReference type="NCBI Taxonomy" id="4113"/>
    <lineage>
        <taxon>Eukaryota</taxon>
        <taxon>Viridiplantae</taxon>
        <taxon>Streptophyta</taxon>
        <taxon>Embryophyta</taxon>
        <taxon>Tracheophyta</taxon>
        <taxon>Spermatophyta</taxon>
        <taxon>Magnoliopsida</taxon>
        <taxon>eudicotyledons</taxon>
        <taxon>Gunneridae</taxon>
        <taxon>Pentapetalae</taxon>
        <taxon>asterids</taxon>
        <taxon>lamiids</taxon>
        <taxon>Solanales</taxon>
        <taxon>Solanaceae</taxon>
        <taxon>Solanoideae</taxon>
        <taxon>Solaneae</taxon>
        <taxon>Solanum</taxon>
    </lineage>
</organism>
<reference key="1">
    <citation type="journal article" date="2004" name="Plant J.">
        <title>Potato lectin: an updated model of a unique chimeric plant protein.</title>
        <authorList>
            <person name="Van Damme E.J."/>
            <person name="Barre A."/>
            <person name="Rouge P."/>
            <person name="Peumans W.J."/>
        </authorList>
    </citation>
    <scope>NUCLEOTIDE SEQUENCE [MRNA]</scope>
    <scope>DOMAIN MODELING</scope>
</reference>
<reference key="2">
    <citation type="journal article" date="1994" name="Plant J.">
        <title>Potato lectin: a modular protein sharing sequence similarities with the extensin family, the hevein lectin family, and snake venom disintegrins (platelet aggregation inhibitors).</title>
        <authorList>
            <person name="Kieliszewski M.J."/>
            <person name="Showalter A.M."/>
            <person name="Leykam J.F."/>
        </authorList>
    </citation>
    <scope>PROTEIN SEQUENCE OF 73-79; 90-94; 131-137 AND 149-177</scope>
    <scope>HYDROXYLATION AT PRO-152; PRO-153; PRO-154; PRO-155; PRO-156; PRO-157; PRO-159; PRO-161; PRO-162; PRO-163; PRO-164; PRO-166; PRO-167; PRO-169; PRO-170; PRO-171; PRO-172; PRO-174 AND PRO-175</scope>
</reference>
<reference key="3">
    <citation type="journal article" date="1996" name="Int. J. Biochem. Cell Biol.">
        <title>Potato lectin: a three-domain glycoprotein with novel hydroxyproline-containing sequences and sequence similarities to wheat-germ agglutinin.</title>
        <authorList>
            <person name="Allen A.K."/>
            <person name="Bolwell G.P."/>
            <person name="Brown D.S."/>
            <person name="Sidebottom C."/>
            <person name="Slabas A.R."/>
        </authorList>
    </citation>
    <scope>PARTIAL PROTEIN SEQUENCE</scope>
    <scope>IDENTIFICATION BY MASS SPECTROMETRY</scope>
    <scope>DOMAIN ORGANIZATION</scope>
</reference>
<reference key="4">
    <citation type="journal article" date="2000" name="J. Biochem.">
        <title>Isolectins from Solanum tuberosum with different detailed carbohydrate binding specificities: unexpected recognition of lactosylceramide by N-acetyllactosamine-binding lectins.</title>
        <authorList>
            <person name="Ciopraga J."/>
            <person name="Aangstroem J."/>
            <person name="Bergstroem J."/>
            <person name="Larsson T."/>
            <person name="Karlsson N."/>
            <person name="Motas C."/>
            <person name="Gozia O."/>
            <person name="Teneberg S."/>
        </authorList>
    </citation>
    <scope>PARTIAL PROTEIN SEQUENCE</scope>
    <scope>BINDING SPECIFICITIES</scope>
</reference>
<reference key="5">
    <citation type="journal article" date="1978" name="Biochem. J.">
        <title>Properties of potato lectin and the nature of its glycoprotein linkages.</title>
        <authorList>
            <person name="Allen A.K."/>
            <person name="Desai N.N."/>
            <person name="Neuberger A."/>
            <person name="Creeth J.M."/>
        </authorList>
    </citation>
    <scope>HYDROXYLATION AT PRO-50; PRO-51; PRO-53; PRO-55; PRO-152; PRO-153; PRO-154; PRO-155; PRO-156; PRO-157; PRO-158; PRO-159; PRO-161; PRO-162; PRO-163; PRO-164; PRO-166; PRO-167; PRO-169; PRO-170; PRO-171; PRO-172; PRO-174; PRO-175; PRO-176; PRO-177; PRO-178; PRO-179; PRO-180; PRO-182; PRO-183; PRO-184; PRO-185; PRO-187; PRO-188; PRO-189; PRO-190; PRO-192; PRO-194; PRO-195; PRO-196; PRO-197; PRO-198; PRO-201; PRO-202; PRO-203; PRO-204; PRO-205; PRO-206 AND PRO-209</scope>
    <scope>GLYCOSYLATION AT PRO-50; PRO-51; PRO-53; PRO-55; SER-151; PRO-152; PRO-153; PRO-154; PRO-155; PRO-156; PRO-157; PRO-158; PRO-159; SER-160; PRO-161; PRO-162; PRO-163; PRO-164; SER-165; PRO-166; PRO-167; SER-168; PRO-169; PRO-170; PRO-171; PRO-172; SER-173; PRO-174; PRO-175; PRO-176; PRO-177; PRO-178; PRO-179; PRO-180; SER-181; PRO-182; PRO-183; PRO-184; PRO-185; SER-186; PRO-187; PRO-188; PRO-189; PRO-190; SER-191; PRO-192; SER-193; PRO-194; PRO-195; PRO-196; PRO-197; PRO-198; SER-200; PRO-201; PRO-202; PRO-203; PRO-204; PRO-205; PRO-206 AND PRO-209</scope>
</reference>
<accession>Q9S8M0</accession>
<name>LECT_SOLTU</name>
<keyword id="KW-0147">Chitin-binding</keyword>
<keyword id="KW-0903">Direct protein sequencing</keyword>
<keyword id="KW-1015">Disulfide bond</keyword>
<keyword id="KW-0325">Glycoprotein</keyword>
<keyword id="KW-0379">Hydroxylation</keyword>
<keyword id="KW-0430">Lectin</keyword>
<keyword id="KW-0611">Plant defense</keyword>
<keyword id="KW-1185">Reference proteome</keyword>
<keyword id="KW-0677">Repeat</keyword>
<keyword id="KW-0732">Signal</keyword>
<feature type="signal peptide" evidence="2">
    <location>
        <begin position="1"/>
        <end position="22"/>
    </location>
</feature>
<feature type="chain" id="PRO_0000005274" description="Chitin-binding lectin 1">
    <location>
        <begin position="23"/>
        <end position="323"/>
    </location>
</feature>
<feature type="domain" description="Chitin-binding type-1 1" evidence="3">
    <location>
        <begin position="58"/>
        <end position="101"/>
    </location>
</feature>
<feature type="domain" description="Chitin-binding type-1 2" evidence="3">
    <location>
        <begin position="105"/>
        <end position="149"/>
    </location>
</feature>
<feature type="repeat" description="1">
    <location>
        <begin position="151"/>
        <end position="159"/>
    </location>
</feature>
<feature type="repeat" description="2">
    <location>
        <begin position="160"/>
        <end position="164"/>
    </location>
</feature>
<feature type="repeat" description="3">
    <location>
        <begin position="165"/>
        <end position="167"/>
    </location>
</feature>
<feature type="repeat" description="4">
    <location>
        <begin position="168"/>
        <end position="172"/>
    </location>
</feature>
<feature type="repeat" description="5">
    <location>
        <begin position="173"/>
        <end position="180"/>
    </location>
</feature>
<feature type="repeat" description="6">
    <location>
        <begin position="181"/>
        <end position="185"/>
    </location>
</feature>
<feature type="repeat" description="7">
    <location>
        <begin position="186"/>
        <end position="190"/>
    </location>
</feature>
<feature type="repeat" description="8">
    <location>
        <begin position="191"/>
        <end position="192"/>
    </location>
</feature>
<feature type="repeat" description="9">
    <location>
        <begin position="193"/>
        <end position="198"/>
    </location>
</feature>
<feature type="repeat" description="10">
    <location>
        <begin position="200"/>
        <end position="206"/>
    </location>
</feature>
<feature type="domain" description="Chitin-binding type-1 3" evidence="3">
    <location>
        <begin position="210"/>
        <end position="253"/>
    </location>
</feature>
<feature type="domain" description="Chitin-binding type-1 4" evidence="3">
    <location>
        <begin position="257"/>
        <end position="301"/>
    </location>
</feature>
<feature type="region of interest" description="Extensin-like">
    <location>
        <begin position="150"/>
        <end position="210"/>
    </location>
</feature>
<feature type="region of interest" description="10 X approximate repeats of S-P-P-P-P">
    <location>
        <begin position="151"/>
        <end position="206"/>
    </location>
</feature>
<feature type="region of interest" description="Disordered" evidence="4">
    <location>
        <begin position="154"/>
        <end position="203"/>
    </location>
</feature>
<feature type="binding site" evidence="1">
    <location>
        <position position="78"/>
    </location>
    <ligand>
        <name>chitin</name>
        <dbReference type="ChEBI" id="CHEBI:17029"/>
    </ligand>
</feature>
<feature type="binding site" evidence="1">
    <location>
        <position position="80"/>
    </location>
    <ligand>
        <name>chitin</name>
        <dbReference type="ChEBI" id="CHEBI:17029"/>
    </ligand>
</feature>
<feature type="binding site" evidence="1">
    <location>
        <position position="82"/>
    </location>
    <ligand>
        <name>chitin</name>
        <dbReference type="ChEBI" id="CHEBI:17029"/>
    </ligand>
</feature>
<feature type="binding site" evidence="1">
    <location>
        <position position="89"/>
    </location>
    <ligand>
        <name>chitin</name>
        <dbReference type="ChEBI" id="CHEBI:17029"/>
    </ligand>
</feature>
<feature type="binding site" evidence="1">
    <location>
        <position position="230"/>
    </location>
    <ligand>
        <name>chitin</name>
        <dbReference type="ChEBI" id="CHEBI:17029"/>
    </ligand>
</feature>
<feature type="binding site" evidence="1">
    <location>
        <position position="232"/>
    </location>
    <ligand>
        <name>chitin</name>
        <dbReference type="ChEBI" id="CHEBI:17029"/>
    </ligand>
</feature>
<feature type="binding site" evidence="1">
    <location>
        <position position="234"/>
    </location>
    <ligand>
        <name>chitin</name>
        <dbReference type="ChEBI" id="CHEBI:17029"/>
    </ligand>
</feature>
<feature type="binding site" evidence="1">
    <location>
        <position position="241"/>
    </location>
    <ligand>
        <name>chitin</name>
        <dbReference type="ChEBI" id="CHEBI:17029"/>
    </ligand>
</feature>
<feature type="modified residue" description="4-hydroxyproline" evidence="8">
    <location>
        <position position="50"/>
    </location>
</feature>
<feature type="modified residue" description="4-hydroxyproline" evidence="8">
    <location>
        <position position="51"/>
    </location>
</feature>
<feature type="modified residue" description="4-hydroxyproline" evidence="8">
    <location>
        <position position="53"/>
    </location>
</feature>
<feature type="modified residue" description="4-hydroxyproline" evidence="8">
    <location>
        <position position="55"/>
    </location>
</feature>
<feature type="modified residue" description="4-hydroxyproline" evidence="6 8">
    <location>
        <position position="152"/>
    </location>
</feature>
<feature type="modified residue" description="4-hydroxyproline" evidence="6 8">
    <location>
        <position position="153"/>
    </location>
</feature>
<feature type="modified residue" description="4-hydroxyproline" evidence="6 8">
    <location>
        <position position="154"/>
    </location>
</feature>
<feature type="modified residue" description="4-hydroxyproline" evidence="6 8">
    <location>
        <position position="155"/>
    </location>
</feature>
<feature type="modified residue" description="4-hydroxyproline" evidence="6 8">
    <location>
        <position position="156"/>
    </location>
</feature>
<feature type="modified residue" description="4-hydroxyproline" evidence="6 8">
    <location>
        <position position="157"/>
    </location>
</feature>
<feature type="modified residue" description="4-hydroxyproline" evidence="8">
    <location>
        <position position="158"/>
    </location>
</feature>
<feature type="modified residue" description="4-hydroxyproline" evidence="6 8">
    <location>
        <position position="159"/>
    </location>
</feature>
<feature type="modified residue" description="4-hydroxyproline" evidence="6 8">
    <location>
        <position position="161"/>
    </location>
</feature>
<feature type="modified residue" description="4-hydroxyproline" evidence="6 8">
    <location>
        <position position="162"/>
    </location>
</feature>
<feature type="modified residue" description="4-hydroxyproline" evidence="6 8">
    <location>
        <position position="163"/>
    </location>
</feature>
<feature type="modified residue" description="4-hydroxyproline" evidence="6 8">
    <location>
        <position position="164"/>
    </location>
</feature>
<feature type="modified residue" description="4-hydroxyproline" evidence="6 8">
    <location>
        <position position="166"/>
    </location>
</feature>
<feature type="modified residue" description="4-hydroxyproline" evidence="6 8">
    <location>
        <position position="167"/>
    </location>
</feature>
<feature type="modified residue" description="4-hydroxyproline" evidence="6 8">
    <location>
        <position position="169"/>
    </location>
</feature>
<feature type="modified residue" description="4-hydroxyproline" evidence="6 8">
    <location>
        <position position="170"/>
    </location>
</feature>
<feature type="modified residue" description="4-hydroxyproline" evidence="6 8">
    <location>
        <position position="171"/>
    </location>
</feature>
<feature type="modified residue" description="4-hydroxyproline" evidence="6 8">
    <location>
        <position position="172"/>
    </location>
</feature>
<feature type="modified residue" description="4-hydroxyproline" evidence="6 8">
    <location>
        <position position="174"/>
    </location>
</feature>
<feature type="modified residue" description="4-hydroxyproline" evidence="6 8">
    <location>
        <position position="175"/>
    </location>
</feature>
<feature type="modified residue" description="4-hydroxyproline" evidence="8">
    <location>
        <position position="176"/>
    </location>
</feature>
<feature type="modified residue" description="4-hydroxyproline" evidence="6 8">
    <location>
        <position position="177"/>
    </location>
</feature>
<feature type="modified residue" description="4-hydroxyproline" evidence="8">
    <location>
        <position position="178"/>
    </location>
</feature>
<feature type="modified residue" description="4-hydroxyproline" evidence="8">
    <location>
        <position position="179"/>
    </location>
</feature>
<feature type="modified residue" description="4-hydroxyproline" evidence="8">
    <location>
        <position position="180"/>
    </location>
</feature>
<feature type="modified residue" description="4-hydroxyproline" evidence="8">
    <location>
        <position position="182"/>
    </location>
</feature>
<feature type="modified residue" description="4-hydroxyproline" evidence="8">
    <location>
        <position position="183"/>
    </location>
</feature>
<feature type="modified residue" description="4-hydroxyproline" evidence="8">
    <location>
        <position position="184"/>
    </location>
</feature>
<feature type="modified residue" description="4-hydroxyproline" evidence="8">
    <location>
        <position position="185"/>
    </location>
</feature>
<feature type="modified residue" description="4-hydroxyproline" evidence="8">
    <location>
        <position position="187"/>
    </location>
</feature>
<feature type="modified residue" description="4-hydroxyproline" evidence="8">
    <location>
        <position position="188"/>
    </location>
</feature>
<feature type="modified residue" description="4-hydroxyproline" evidence="8">
    <location>
        <position position="189"/>
    </location>
</feature>
<feature type="modified residue" description="4-hydroxyproline" evidence="8">
    <location>
        <position position="190"/>
    </location>
</feature>
<feature type="modified residue" description="4-hydroxyproline" evidence="8">
    <location>
        <position position="192"/>
    </location>
</feature>
<feature type="modified residue" description="4-hydroxyproline" evidence="8">
    <location>
        <position position="194"/>
    </location>
</feature>
<feature type="modified residue" description="4-hydroxyproline" evidence="8">
    <location>
        <position position="195"/>
    </location>
</feature>
<feature type="modified residue" description="4-hydroxyproline" evidence="8">
    <location>
        <position position="196"/>
    </location>
</feature>
<feature type="modified residue" description="4-hydroxyproline" evidence="8">
    <location>
        <position position="197"/>
    </location>
</feature>
<feature type="modified residue" description="4-hydroxyproline" evidence="8">
    <location>
        <position position="198"/>
    </location>
</feature>
<feature type="modified residue" description="4-hydroxyproline" evidence="8">
    <location>
        <position position="201"/>
    </location>
</feature>
<feature type="modified residue" description="4-hydroxyproline" evidence="8">
    <location>
        <position position="202"/>
    </location>
</feature>
<feature type="modified residue" description="4-hydroxyproline" evidence="8">
    <location>
        <position position="203"/>
    </location>
</feature>
<feature type="modified residue" description="4-hydroxyproline" evidence="8">
    <location>
        <position position="204"/>
    </location>
</feature>
<feature type="modified residue" description="4-hydroxyproline" evidence="8">
    <location>
        <position position="205"/>
    </location>
</feature>
<feature type="modified residue" description="4-hydroxyproline" evidence="8">
    <location>
        <position position="206"/>
    </location>
</feature>
<feature type="modified residue" description="4-hydroxyproline" evidence="8">
    <location>
        <position position="209"/>
    </location>
</feature>
<feature type="glycosylation site" description="O-linked (Ara...) hydroxyproline" evidence="8">
    <location>
        <position position="50"/>
    </location>
</feature>
<feature type="glycosylation site" description="O-linked (Ara...) hydroxyproline" evidence="8">
    <location>
        <position position="51"/>
    </location>
</feature>
<feature type="glycosylation site" description="O-linked (Ara...) hydroxyproline" evidence="8">
    <location>
        <position position="53"/>
    </location>
</feature>
<feature type="glycosylation site" description="O-linked (Ara...) hydroxyproline" evidence="8">
    <location>
        <position position="55"/>
    </location>
</feature>
<feature type="glycosylation site" description="O-linked (Gal) serine" evidence="8">
    <location>
        <position position="151"/>
    </location>
</feature>
<feature type="glycosylation site" description="O-linked (Ara...) hydroxyproline" evidence="8">
    <location>
        <position position="152"/>
    </location>
</feature>
<feature type="glycosylation site" description="O-linked (Ara...) hydroxyproline" evidence="8">
    <location>
        <position position="153"/>
    </location>
</feature>
<feature type="glycosylation site" description="O-linked (Ara...) hydroxyproline" evidence="8">
    <location>
        <position position="154"/>
    </location>
</feature>
<feature type="glycosylation site" description="O-linked (Ara...) hydroxyproline" evidence="8">
    <location>
        <position position="155"/>
    </location>
</feature>
<feature type="glycosylation site" description="O-linked (Ara...) hydroxyproline" evidence="8">
    <location>
        <position position="156"/>
    </location>
</feature>
<feature type="glycosylation site" description="O-linked (Ara...) hydroxyproline" evidence="8">
    <location>
        <position position="157"/>
    </location>
</feature>
<feature type="glycosylation site" description="O-linked (Ara...) hydroxyproline" evidence="8">
    <location>
        <position position="158"/>
    </location>
</feature>
<feature type="glycosylation site" description="O-linked (Ara...) hydroxyproline" evidence="8">
    <location>
        <position position="159"/>
    </location>
</feature>
<feature type="glycosylation site" description="O-linked (Gal) serine" evidence="8">
    <location>
        <position position="160"/>
    </location>
</feature>
<feature type="glycosylation site" description="O-linked (Ara...) hydroxyproline" evidence="8">
    <location>
        <position position="161"/>
    </location>
</feature>
<feature type="glycosylation site" description="O-linked (Ara...) hydroxyproline" evidence="8">
    <location>
        <position position="162"/>
    </location>
</feature>
<feature type="glycosylation site" description="O-linked (Ara...) hydroxyproline" evidence="8">
    <location>
        <position position="163"/>
    </location>
</feature>
<feature type="glycosylation site" description="O-linked (Ara...) hydroxyproline" evidence="8">
    <location>
        <position position="164"/>
    </location>
</feature>
<feature type="glycosylation site" description="O-linked (Gal) serine" evidence="8">
    <location>
        <position position="165"/>
    </location>
</feature>
<feature type="glycosylation site" description="O-linked (Ara...) hydroxyproline" evidence="8">
    <location>
        <position position="166"/>
    </location>
</feature>
<feature type="glycosylation site" description="O-linked (Ara...) hydroxyproline" evidence="8">
    <location>
        <position position="167"/>
    </location>
</feature>
<feature type="glycosylation site" description="O-linked (Gal) serine" evidence="8">
    <location>
        <position position="168"/>
    </location>
</feature>
<feature type="glycosylation site" description="O-linked (Ara...) hydroxyproline" evidence="8">
    <location>
        <position position="169"/>
    </location>
</feature>
<feature type="glycosylation site" description="O-linked (Ara...) hydroxyproline" evidence="8">
    <location>
        <position position="170"/>
    </location>
</feature>
<feature type="glycosylation site" description="O-linked (Ara...) hydroxyproline" evidence="8">
    <location>
        <position position="171"/>
    </location>
</feature>
<feature type="glycosylation site" description="O-linked (Ara...) hydroxyproline" evidence="8">
    <location>
        <position position="172"/>
    </location>
</feature>
<feature type="glycosylation site" description="O-linked (Gal) serine" evidence="8">
    <location>
        <position position="173"/>
    </location>
</feature>
<feature type="glycosylation site" description="O-linked (Ara...) hydroxyproline" evidence="8">
    <location>
        <position position="174"/>
    </location>
</feature>
<feature type="glycosylation site" description="O-linked (Ara...) hydroxyproline" evidence="8">
    <location>
        <position position="175"/>
    </location>
</feature>
<feature type="glycosylation site" description="O-linked (Ara...) hydroxyproline" evidence="8">
    <location>
        <position position="176"/>
    </location>
</feature>
<feature type="glycosylation site" description="O-linked (Ara...) hydroxyproline" evidence="8">
    <location>
        <position position="177"/>
    </location>
</feature>
<feature type="glycosylation site" description="O-linked (Ara...) hydroxyproline" evidence="8">
    <location>
        <position position="178"/>
    </location>
</feature>
<feature type="glycosylation site" description="O-linked (Ara...) hydroxyproline" evidence="8">
    <location>
        <position position="179"/>
    </location>
</feature>
<feature type="glycosylation site" description="O-linked (Ara...) hydroxyproline" evidence="8">
    <location>
        <position position="180"/>
    </location>
</feature>
<feature type="glycosylation site" description="O-linked (Gal) serine" evidence="8">
    <location>
        <position position="181"/>
    </location>
</feature>
<feature type="glycosylation site" description="O-linked (Ara...) hydroxyproline" evidence="8">
    <location>
        <position position="182"/>
    </location>
</feature>
<feature type="glycosylation site" description="O-linked (Ara...) hydroxyproline" evidence="8">
    <location>
        <position position="183"/>
    </location>
</feature>
<feature type="glycosylation site" description="O-linked (Ara...) hydroxyproline" evidence="8">
    <location>
        <position position="184"/>
    </location>
</feature>
<feature type="glycosylation site" description="O-linked (Ara...) hydroxyproline" evidence="8">
    <location>
        <position position="185"/>
    </location>
</feature>
<feature type="glycosylation site" description="O-linked (Gal) serine" evidence="8">
    <location>
        <position position="186"/>
    </location>
</feature>
<feature type="glycosylation site" description="O-linked (Ara...) hydroxyproline" evidence="8">
    <location>
        <position position="187"/>
    </location>
</feature>
<feature type="glycosylation site" description="O-linked (Ara...) hydroxyproline" evidence="8">
    <location>
        <position position="188"/>
    </location>
</feature>
<feature type="glycosylation site" description="O-linked (Ara...) hydroxyproline" evidence="8">
    <location>
        <position position="189"/>
    </location>
</feature>
<feature type="glycosylation site" description="O-linked (Ara...) hydroxyproline" evidence="8">
    <location>
        <position position="190"/>
    </location>
</feature>
<feature type="glycosylation site" description="O-linked (Gal) serine" evidence="8">
    <location>
        <position position="191"/>
    </location>
</feature>
<feature type="glycosylation site" description="O-linked (Ara...) hydroxyproline" evidence="8">
    <location>
        <position position="192"/>
    </location>
</feature>
<feature type="glycosylation site" description="O-linked (Gal) serine" evidence="8">
    <location>
        <position position="193"/>
    </location>
</feature>
<feature type="glycosylation site" description="O-linked (Ara...) hydroxyproline" evidence="8">
    <location>
        <position position="194"/>
    </location>
</feature>
<feature type="glycosylation site" description="O-linked (Ara...) hydroxyproline" evidence="8">
    <location>
        <position position="195"/>
    </location>
</feature>
<feature type="glycosylation site" description="O-linked (Ara...) hydroxyproline" evidence="8">
    <location>
        <position position="196"/>
    </location>
</feature>
<feature type="glycosylation site" description="O-linked (Ara...) hydroxyproline" evidence="8">
    <location>
        <position position="197"/>
    </location>
</feature>
<feature type="glycosylation site" description="O-linked (Ara...) hydroxyproline" evidence="8">
    <location>
        <position position="198"/>
    </location>
</feature>
<feature type="glycosylation site" description="O-linked (Gal) serine" evidence="8">
    <location>
        <position position="200"/>
    </location>
</feature>
<feature type="glycosylation site" description="O-linked (Ara...) hydroxyproline" evidence="8">
    <location>
        <position position="201"/>
    </location>
</feature>
<feature type="glycosylation site" description="O-linked (Ara...) hydroxyproline" evidence="8">
    <location>
        <position position="202"/>
    </location>
</feature>
<feature type="glycosylation site" description="O-linked (Ara...) hydroxyproline" evidence="8">
    <location>
        <position position="203"/>
    </location>
</feature>
<feature type="glycosylation site" description="O-linked (Ara...) hydroxyproline" evidence="8">
    <location>
        <position position="204"/>
    </location>
</feature>
<feature type="glycosylation site" description="O-linked (Ara...) hydroxyproline" evidence="8">
    <location>
        <position position="205"/>
    </location>
</feature>
<feature type="glycosylation site" description="O-linked (Ara...) hydroxyproline" evidence="8">
    <location>
        <position position="206"/>
    </location>
</feature>
<feature type="glycosylation site" description="O-linked (Ara...) hydroxyproline" evidence="8">
    <location>
        <position position="209"/>
    </location>
</feature>
<feature type="disulfide bond" evidence="3">
    <location>
        <begin position="61"/>
        <end position="77"/>
    </location>
</feature>
<feature type="disulfide bond" evidence="3">
    <location>
        <begin position="70"/>
        <end position="83"/>
    </location>
</feature>
<feature type="disulfide bond" evidence="3">
    <location>
        <begin position="76"/>
        <end position="90"/>
    </location>
</feature>
<feature type="disulfide bond" evidence="3">
    <location>
        <begin position="95"/>
        <end position="99"/>
    </location>
</feature>
<feature type="disulfide bond" evidence="3">
    <location>
        <begin position="108"/>
        <end position="125"/>
    </location>
</feature>
<feature type="disulfide bond" evidence="3">
    <location>
        <begin position="117"/>
        <end position="131"/>
    </location>
</feature>
<feature type="disulfide bond" evidence="3">
    <location>
        <begin position="124"/>
        <end position="138"/>
    </location>
</feature>
<feature type="disulfide bond" evidence="3">
    <location>
        <begin position="143"/>
        <end position="147"/>
    </location>
</feature>
<feature type="disulfide bond" evidence="3">
    <location>
        <begin position="213"/>
        <end position="229"/>
    </location>
</feature>
<feature type="disulfide bond" evidence="3">
    <location>
        <begin position="222"/>
        <end position="235"/>
    </location>
</feature>
<feature type="disulfide bond" evidence="3">
    <location>
        <begin position="228"/>
        <end position="242"/>
    </location>
</feature>
<feature type="disulfide bond" evidence="3">
    <location>
        <begin position="247"/>
        <end position="251"/>
    </location>
</feature>
<feature type="disulfide bond" evidence="3">
    <location>
        <begin position="260"/>
        <end position="277"/>
    </location>
</feature>
<feature type="disulfide bond" evidence="3">
    <location>
        <begin position="269"/>
        <end position="283"/>
    </location>
</feature>
<feature type="disulfide bond" evidence="3">
    <location>
        <begin position="276"/>
        <end position="290"/>
    </location>
</feature>
<feature type="disulfide bond" evidence="3">
    <location>
        <begin position="295"/>
        <end position="299"/>
    </location>
</feature>
<feature type="sequence conflict" description="In Ref. 3; AA sequence and 4; AA sequence." evidence="7" ref="3 4">
    <original>P</original>
    <variation>T</variation>
    <location>
        <position position="50"/>
    </location>
</feature>
<feature type="sequence conflict" description="In Ref. 3; AA sequence and 4; AA sequence." evidence="7" ref="3 4">
    <original>S</original>
    <variation>P</variation>
    <location>
        <position position="54"/>
    </location>
</feature>
<feature type="sequence conflict" description="In Ref. 4; AA sequence." evidence="7" ref="4">
    <original>PQC</original>
    <variation>LQY</variation>
    <location>
        <begin position="59"/>
        <end position="61"/>
    </location>
</feature>
<feature type="sequence conflict" description="In Ref. 3; AA sequence and 4; AA sequence." evidence="7" ref="3 4">
    <original>M</original>
    <variation>L</variation>
    <location>
        <position position="63"/>
    </location>
</feature>
<feature type="sequence conflict" description="In Ref. 3; AA sequence." evidence="7" ref="3">
    <original>G</original>
    <variation>P</variation>
    <location>
        <position position="66"/>
    </location>
</feature>
<feature type="sequence conflict" description="In Ref. 4; AA sequence." evidence="7" ref="4">
    <original>T</original>
    <variation>G</variation>
    <location>
        <position position="73"/>
    </location>
</feature>
<feature type="sequence conflict" description="In Ref. 2; AA sequence." evidence="7" ref="2">
    <original>P</original>
    <variation>H</variation>
    <location>
        <position position="158"/>
    </location>
</feature>